<accession>O81850</accession>
<accession>Q2V3G9</accession>
<accession>Q5M756</accession>
<dbReference type="EMBL" id="AL024486">
    <property type="protein sequence ID" value="CAA19685.1"/>
    <property type="molecule type" value="Genomic_DNA"/>
</dbReference>
<dbReference type="EMBL" id="AL161551">
    <property type="protein sequence ID" value="CAB78970.1"/>
    <property type="molecule type" value="Genomic_DNA"/>
</dbReference>
<dbReference type="EMBL" id="CP002687">
    <property type="protein sequence ID" value="AEE84214.1"/>
    <property type="molecule type" value="Genomic_DNA"/>
</dbReference>
<dbReference type="EMBL" id="CP002687">
    <property type="protein sequence ID" value="AEE84215.1"/>
    <property type="molecule type" value="Genomic_DNA"/>
</dbReference>
<dbReference type="EMBL" id="BT020392">
    <property type="protein sequence ID" value="AAV91338.1"/>
    <property type="molecule type" value="mRNA"/>
</dbReference>
<dbReference type="EMBL" id="BT025714">
    <property type="protein sequence ID" value="ABF82617.1"/>
    <property type="molecule type" value="mRNA"/>
</dbReference>
<dbReference type="PIR" id="T04749">
    <property type="entry name" value="T04749"/>
</dbReference>
<dbReference type="RefSeq" id="NP_001031670.1">
    <molecule id="O81850-1"/>
    <property type="nucleotide sequence ID" value="NM_001036593.2"/>
</dbReference>
<dbReference type="RefSeq" id="NP_193703.2">
    <molecule id="O81850-2"/>
    <property type="nucleotide sequence ID" value="NM_118088.4"/>
</dbReference>
<dbReference type="FunCoup" id="O81850">
    <property type="interactions" value="2538"/>
</dbReference>
<dbReference type="STRING" id="3702.O81850"/>
<dbReference type="TCDB" id="2.A.5.1.4">
    <property type="family name" value="the zinc (zn(2+))-iron (fe(2+)) permease (zip) family"/>
</dbReference>
<dbReference type="PaxDb" id="3702-AT4G19680.2"/>
<dbReference type="EnsemblPlants" id="AT4G19680.1">
    <molecule id="O81850-2"/>
    <property type="protein sequence ID" value="AT4G19680.1"/>
    <property type="gene ID" value="AT4G19680"/>
</dbReference>
<dbReference type="EnsemblPlants" id="AT4G19680.2">
    <molecule id="O81850-1"/>
    <property type="protein sequence ID" value="AT4G19680.2"/>
    <property type="gene ID" value="AT4G19680"/>
</dbReference>
<dbReference type="GeneID" id="827712"/>
<dbReference type="Gramene" id="AT4G19680.1">
    <molecule id="O81850-2"/>
    <property type="protein sequence ID" value="AT4G19680.1"/>
    <property type="gene ID" value="AT4G19680"/>
</dbReference>
<dbReference type="Gramene" id="AT4G19680.2">
    <molecule id="O81850-1"/>
    <property type="protein sequence ID" value="AT4G19680.2"/>
    <property type="gene ID" value="AT4G19680"/>
</dbReference>
<dbReference type="KEGG" id="ath:AT4G19680"/>
<dbReference type="Araport" id="AT4G19680"/>
<dbReference type="TAIR" id="AT4G19680">
    <property type="gene designation" value="IRT2"/>
</dbReference>
<dbReference type="eggNOG" id="KOG1558">
    <property type="taxonomic scope" value="Eukaryota"/>
</dbReference>
<dbReference type="HOGENOM" id="CLU_027089_3_0_1"/>
<dbReference type="InParanoid" id="O81850"/>
<dbReference type="OMA" id="CDIGLEN"/>
<dbReference type="OrthoDB" id="448280at2759"/>
<dbReference type="PhylomeDB" id="O81850"/>
<dbReference type="BioCyc" id="ARA:AT4G19680-MONOMER"/>
<dbReference type="BioCyc" id="MetaCyc:AT4G19680-MONOMER"/>
<dbReference type="PRO" id="PR:O81850"/>
<dbReference type="Proteomes" id="UP000006548">
    <property type="component" value="Chromosome 4"/>
</dbReference>
<dbReference type="ExpressionAtlas" id="O81850">
    <property type="expression patterns" value="baseline and differential"/>
</dbReference>
<dbReference type="GO" id="GO:0005886">
    <property type="term" value="C:plasma membrane"/>
    <property type="evidence" value="ECO:0007669"/>
    <property type="project" value="UniProtKB-SubCell"/>
</dbReference>
<dbReference type="GO" id="GO:0005385">
    <property type="term" value="F:zinc ion transmembrane transporter activity"/>
    <property type="evidence" value="ECO:0007669"/>
    <property type="project" value="InterPro"/>
</dbReference>
<dbReference type="GO" id="GO:0006826">
    <property type="term" value="P:iron ion transport"/>
    <property type="evidence" value="ECO:0007669"/>
    <property type="project" value="UniProtKB-KW"/>
</dbReference>
<dbReference type="InterPro" id="IPR003689">
    <property type="entry name" value="ZIP"/>
</dbReference>
<dbReference type="InterPro" id="IPR004698">
    <property type="entry name" value="Zn/Fe_permease_fun/pln"/>
</dbReference>
<dbReference type="NCBIfam" id="TIGR00820">
    <property type="entry name" value="zip"/>
    <property type="match status" value="1"/>
</dbReference>
<dbReference type="PANTHER" id="PTHR11040:SF145">
    <property type="entry name" value="FE(2+) TRANSPORT PROTEIN 2"/>
    <property type="match status" value="1"/>
</dbReference>
<dbReference type="PANTHER" id="PTHR11040">
    <property type="entry name" value="ZINC/IRON TRANSPORTER"/>
    <property type="match status" value="1"/>
</dbReference>
<dbReference type="Pfam" id="PF02535">
    <property type="entry name" value="Zip"/>
    <property type="match status" value="1"/>
</dbReference>
<organism>
    <name type="scientific">Arabidopsis thaliana</name>
    <name type="common">Mouse-ear cress</name>
    <dbReference type="NCBI Taxonomy" id="3702"/>
    <lineage>
        <taxon>Eukaryota</taxon>
        <taxon>Viridiplantae</taxon>
        <taxon>Streptophyta</taxon>
        <taxon>Embryophyta</taxon>
        <taxon>Tracheophyta</taxon>
        <taxon>Spermatophyta</taxon>
        <taxon>Magnoliopsida</taxon>
        <taxon>eudicotyledons</taxon>
        <taxon>Gunneridae</taxon>
        <taxon>Pentapetalae</taxon>
        <taxon>rosids</taxon>
        <taxon>malvids</taxon>
        <taxon>Brassicales</taxon>
        <taxon>Brassicaceae</taxon>
        <taxon>Camelineae</taxon>
        <taxon>Arabidopsis</taxon>
    </lineage>
</organism>
<feature type="signal peptide" evidence="1">
    <location>
        <begin position="1"/>
        <end position="21"/>
    </location>
</feature>
<feature type="chain" id="PRO_0000041637" description="Fe(2+) transport protein 2">
    <location>
        <begin position="22"/>
        <end position="350"/>
    </location>
</feature>
<feature type="topological domain" description="Extracellular" evidence="1">
    <location>
        <begin position="22"/>
        <end position="47"/>
    </location>
</feature>
<feature type="transmembrane region" description="Helical" evidence="1">
    <location>
        <begin position="48"/>
        <end position="68"/>
    </location>
</feature>
<feature type="topological domain" description="Cytoplasmic" evidence="1">
    <location>
        <begin position="69"/>
        <end position="80"/>
    </location>
</feature>
<feature type="transmembrane region" description="Helical" evidence="1">
    <location>
        <begin position="81"/>
        <end position="101"/>
    </location>
</feature>
<feature type="topological domain" description="Extracellular" evidence="1">
    <location>
        <begin position="102"/>
        <end position="120"/>
    </location>
</feature>
<feature type="transmembrane region" description="Helical" evidence="1">
    <location>
        <begin position="121"/>
        <end position="141"/>
    </location>
</feature>
<feature type="topological domain" description="Cytoplasmic" evidence="1">
    <location>
        <begin position="142"/>
        <end position="195"/>
    </location>
</feature>
<feature type="transmembrane region" description="Helical" evidence="1">
    <location>
        <begin position="196"/>
        <end position="216"/>
    </location>
</feature>
<feature type="topological domain" description="Extracellular" evidence="1">
    <location>
        <begin position="217"/>
        <end position="227"/>
    </location>
</feature>
<feature type="transmembrane region" description="Helical" evidence="1">
    <location>
        <begin position="228"/>
        <end position="248"/>
    </location>
</feature>
<feature type="topological domain" description="Cytoplasmic" evidence="1">
    <location>
        <begin position="249"/>
        <end position="257"/>
    </location>
</feature>
<feature type="transmembrane region" description="Helical" evidence="1">
    <location>
        <begin position="258"/>
        <end position="278"/>
    </location>
</feature>
<feature type="topological domain" description="Extracellular" evidence="1">
    <location>
        <begin position="279"/>
        <end position="289"/>
    </location>
</feature>
<feature type="transmembrane region" description="Helical" evidence="1">
    <location>
        <begin position="290"/>
        <end position="310"/>
    </location>
</feature>
<feature type="topological domain" description="Cytoplasmic" evidence="1">
    <location>
        <begin position="311"/>
        <end position="329"/>
    </location>
</feature>
<feature type="transmembrane region" description="Helical" evidence="1">
    <location>
        <begin position="330"/>
        <end position="350"/>
    </location>
</feature>
<feature type="splice variant" id="VSP_026067" description="In isoform 2." evidence="4">
    <original>ADFTNVKK</original>
    <variation>VRIYIHTI</variation>
    <location>
        <begin position="250"/>
        <end position="257"/>
    </location>
</feature>
<feature type="splice variant" id="VSP_026068" description="In isoform 2." evidence="4">
    <location>
        <begin position="258"/>
        <end position="350"/>
    </location>
</feature>
<reference key="1">
    <citation type="journal article" date="2001" name="Plant J.">
        <title>Arabidopsis IRT2 gene encodes a root-periphery iron transporter.</title>
        <authorList>
            <person name="Vert G."/>
            <person name="Briat J.-F."/>
            <person name="Curie C."/>
        </authorList>
    </citation>
    <scope>NUCLEOTIDE SEQUENCE [GENOMIC DNA]</scope>
    <scope>CHARACTERIZATION</scope>
    <scope>FUNCTION</scope>
</reference>
<reference key="2">
    <citation type="journal article" date="1999" name="Nature">
        <title>Sequence and analysis of chromosome 4 of the plant Arabidopsis thaliana.</title>
        <authorList>
            <person name="Mayer K.F.X."/>
            <person name="Schueller C."/>
            <person name="Wambutt R."/>
            <person name="Murphy G."/>
            <person name="Volckaert G."/>
            <person name="Pohl T."/>
            <person name="Duesterhoeft A."/>
            <person name="Stiekema W."/>
            <person name="Entian K.-D."/>
            <person name="Terryn N."/>
            <person name="Harris B."/>
            <person name="Ansorge W."/>
            <person name="Brandt P."/>
            <person name="Grivell L.A."/>
            <person name="Rieger M."/>
            <person name="Weichselgartner M."/>
            <person name="de Simone V."/>
            <person name="Obermaier B."/>
            <person name="Mache R."/>
            <person name="Mueller M."/>
            <person name="Kreis M."/>
            <person name="Delseny M."/>
            <person name="Puigdomenech P."/>
            <person name="Watson M."/>
            <person name="Schmidtheini T."/>
            <person name="Reichert B."/>
            <person name="Portetelle D."/>
            <person name="Perez-Alonso M."/>
            <person name="Boutry M."/>
            <person name="Bancroft I."/>
            <person name="Vos P."/>
            <person name="Hoheisel J."/>
            <person name="Zimmermann W."/>
            <person name="Wedler H."/>
            <person name="Ridley P."/>
            <person name="Langham S.-A."/>
            <person name="McCullagh B."/>
            <person name="Bilham L."/>
            <person name="Robben J."/>
            <person name="van der Schueren J."/>
            <person name="Grymonprez B."/>
            <person name="Chuang Y.-J."/>
            <person name="Vandenbussche F."/>
            <person name="Braeken M."/>
            <person name="Weltjens I."/>
            <person name="Voet M."/>
            <person name="Bastiaens I."/>
            <person name="Aert R."/>
            <person name="Defoor E."/>
            <person name="Weitzenegger T."/>
            <person name="Bothe G."/>
            <person name="Ramsperger U."/>
            <person name="Hilbert H."/>
            <person name="Braun M."/>
            <person name="Holzer E."/>
            <person name="Brandt A."/>
            <person name="Peters S."/>
            <person name="van Staveren M."/>
            <person name="Dirkse W."/>
            <person name="Mooijman P."/>
            <person name="Klein Lankhorst R."/>
            <person name="Rose M."/>
            <person name="Hauf J."/>
            <person name="Koetter P."/>
            <person name="Berneiser S."/>
            <person name="Hempel S."/>
            <person name="Feldpausch M."/>
            <person name="Lamberth S."/>
            <person name="Van den Daele H."/>
            <person name="De Keyser A."/>
            <person name="Buysshaert C."/>
            <person name="Gielen J."/>
            <person name="Villarroel R."/>
            <person name="De Clercq R."/>
            <person name="van Montagu M."/>
            <person name="Rogers J."/>
            <person name="Cronin A."/>
            <person name="Quail M.A."/>
            <person name="Bray-Allen S."/>
            <person name="Clark L."/>
            <person name="Doggett J."/>
            <person name="Hall S."/>
            <person name="Kay M."/>
            <person name="Lennard N."/>
            <person name="McLay K."/>
            <person name="Mayes R."/>
            <person name="Pettett A."/>
            <person name="Rajandream M.A."/>
            <person name="Lyne M."/>
            <person name="Benes V."/>
            <person name="Rechmann S."/>
            <person name="Borkova D."/>
            <person name="Bloecker H."/>
            <person name="Scharfe M."/>
            <person name="Grimm M."/>
            <person name="Loehnert T.-H."/>
            <person name="Dose S."/>
            <person name="de Haan M."/>
            <person name="Maarse A.C."/>
            <person name="Schaefer M."/>
            <person name="Mueller-Auer S."/>
            <person name="Gabel C."/>
            <person name="Fuchs M."/>
            <person name="Fartmann B."/>
            <person name="Granderath K."/>
            <person name="Dauner D."/>
            <person name="Herzl A."/>
            <person name="Neumann S."/>
            <person name="Argiriou A."/>
            <person name="Vitale D."/>
            <person name="Liguori R."/>
            <person name="Piravandi E."/>
            <person name="Massenet O."/>
            <person name="Quigley F."/>
            <person name="Clabauld G."/>
            <person name="Muendlein A."/>
            <person name="Felber R."/>
            <person name="Schnabl S."/>
            <person name="Hiller R."/>
            <person name="Schmidt W."/>
            <person name="Lecharny A."/>
            <person name="Aubourg S."/>
            <person name="Chefdor F."/>
            <person name="Cooke R."/>
            <person name="Berger C."/>
            <person name="Monfort A."/>
            <person name="Casacuberta E."/>
            <person name="Gibbons T."/>
            <person name="Weber N."/>
            <person name="Vandenbol M."/>
            <person name="Bargues M."/>
            <person name="Terol J."/>
            <person name="Torres A."/>
            <person name="Perez-Perez A."/>
            <person name="Purnelle B."/>
            <person name="Bent E."/>
            <person name="Johnson S."/>
            <person name="Tacon D."/>
            <person name="Jesse T."/>
            <person name="Heijnen L."/>
            <person name="Schwarz S."/>
            <person name="Scholler P."/>
            <person name="Heber S."/>
            <person name="Francs P."/>
            <person name="Bielke C."/>
            <person name="Frishman D."/>
            <person name="Haase D."/>
            <person name="Lemcke K."/>
            <person name="Mewes H.-W."/>
            <person name="Stocker S."/>
            <person name="Zaccaria P."/>
            <person name="Bevan M."/>
            <person name="Wilson R.K."/>
            <person name="de la Bastide M."/>
            <person name="Habermann K."/>
            <person name="Parnell L."/>
            <person name="Dedhia N."/>
            <person name="Gnoj L."/>
            <person name="Schutz K."/>
            <person name="Huang E."/>
            <person name="Spiegel L."/>
            <person name="Sekhon M."/>
            <person name="Murray J."/>
            <person name="Sheet P."/>
            <person name="Cordes M."/>
            <person name="Abu-Threideh J."/>
            <person name="Stoneking T."/>
            <person name="Kalicki J."/>
            <person name="Graves T."/>
            <person name="Harmon G."/>
            <person name="Edwards J."/>
            <person name="Latreille P."/>
            <person name="Courtney L."/>
            <person name="Cloud J."/>
            <person name="Abbott A."/>
            <person name="Scott K."/>
            <person name="Johnson D."/>
            <person name="Minx P."/>
            <person name="Bentley D."/>
            <person name="Fulton B."/>
            <person name="Miller N."/>
            <person name="Greco T."/>
            <person name="Kemp K."/>
            <person name="Kramer J."/>
            <person name="Fulton L."/>
            <person name="Mardis E."/>
            <person name="Dante M."/>
            <person name="Pepin K."/>
            <person name="Hillier L.W."/>
            <person name="Nelson J."/>
            <person name="Spieth J."/>
            <person name="Ryan E."/>
            <person name="Andrews S."/>
            <person name="Geisel C."/>
            <person name="Layman D."/>
            <person name="Du H."/>
            <person name="Ali J."/>
            <person name="Berghoff A."/>
            <person name="Jones K."/>
            <person name="Drone K."/>
            <person name="Cotton M."/>
            <person name="Joshu C."/>
            <person name="Antonoiu B."/>
            <person name="Zidanic M."/>
            <person name="Strong C."/>
            <person name="Sun H."/>
            <person name="Lamar B."/>
            <person name="Yordan C."/>
            <person name="Ma P."/>
            <person name="Zhong J."/>
            <person name="Preston R."/>
            <person name="Vil D."/>
            <person name="Shekher M."/>
            <person name="Matero A."/>
            <person name="Shah R."/>
            <person name="Swaby I.K."/>
            <person name="O'Shaughnessy A."/>
            <person name="Rodriguez M."/>
            <person name="Hoffman J."/>
            <person name="Till S."/>
            <person name="Granat S."/>
            <person name="Shohdy N."/>
            <person name="Hasegawa A."/>
            <person name="Hameed A."/>
            <person name="Lodhi M."/>
            <person name="Johnson A."/>
            <person name="Chen E."/>
            <person name="Marra M.A."/>
            <person name="Martienssen R."/>
            <person name="McCombie W.R."/>
        </authorList>
    </citation>
    <scope>NUCLEOTIDE SEQUENCE [LARGE SCALE GENOMIC DNA]</scope>
    <source>
        <strain>cv. Columbia</strain>
    </source>
</reference>
<reference key="3">
    <citation type="journal article" date="2017" name="Plant J.">
        <title>Araport11: a complete reannotation of the Arabidopsis thaliana reference genome.</title>
        <authorList>
            <person name="Cheng C.Y."/>
            <person name="Krishnakumar V."/>
            <person name="Chan A.P."/>
            <person name="Thibaud-Nissen F."/>
            <person name="Schobel S."/>
            <person name="Town C.D."/>
        </authorList>
    </citation>
    <scope>GENOME REANNOTATION</scope>
    <source>
        <strain>cv. Columbia</strain>
    </source>
</reference>
<reference key="4">
    <citation type="submission" date="2004-12" db="EMBL/GenBank/DDBJ databases">
        <title>Arabidopsis ORF clones.</title>
        <authorList>
            <person name="Cheuk R.F."/>
            <person name="Chen H."/>
            <person name="Kim C.J."/>
            <person name="Shinn P."/>
            <person name="Ecker J.R."/>
        </authorList>
    </citation>
    <scope>NUCLEOTIDE SEQUENCE [LARGE SCALE MRNA] (ISOFORM 1)</scope>
    <source>
        <strain>cv. Columbia</strain>
    </source>
</reference>
<reference key="5">
    <citation type="submission" date="2006-06" db="EMBL/GenBank/DDBJ databases">
        <title>Arabidopsis ORF clone.</title>
        <authorList>
            <person name="Quinitio C."/>
            <person name="Chen H."/>
            <person name="Kim C.J."/>
            <person name="Shinn P."/>
            <person name="Ecker J.R."/>
        </authorList>
    </citation>
    <scope>NUCLEOTIDE SEQUENCE [LARGE SCALE MRNA] (ISOFORM 2)</scope>
    <source>
        <strain>cv. Columbia</strain>
    </source>
</reference>
<reference key="6">
    <citation type="journal article" date="2003" name="J. Biol. Chem.">
        <title>Expression profiles of Arabidopsis thaliana in mineral deficiencies reveal novel transporters involved in metal homeostasis.</title>
        <authorList>
            <person name="Wintz H."/>
            <person name="Fox T."/>
            <person name="Wu Y.-Y."/>
            <person name="Feng V."/>
            <person name="Chen W."/>
            <person name="Chang H.-S."/>
            <person name="Zhu T."/>
            <person name="Vulpe C.D."/>
        </authorList>
    </citation>
    <scope>INDUCTION</scope>
</reference>
<evidence type="ECO:0000255" key="1"/>
<evidence type="ECO:0000269" key="2">
    <source>
    </source>
</evidence>
<evidence type="ECO:0000269" key="3">
    <source>
    </source>
</evidence>
<evidence type="ECO:0000303" key="4">
    <source ref="5"/>
</evidence>
<evidence type="ECO:0000305" key="5"/>
<sequence>MATTKLVYILLILFTFTVSPAISTAPEHCDSGFDNPCINKAKALPLKIVAIVAILTTSLIGVTSPLFSRYISFLRPDGNGFMIVKCFSSGIILGTGFMHVLPDSFEMLSSKCLSDNPWHKFPFAGFVAMMSGLVTLAIDSITTSLYTGKNSVGPVPDEEYGIDQEKAIHMVGHNHSHGHGVVLATKDDGQLLRYQVIAMVLEVGILFHSVVIGLSLGATNDSCTIKGLIIALCFHHLFEGIGLGGCILQADFTNVKKFLMAFFFTGTTPCGIFLGIALSSIYRDNSPTALITIGLLNACSAGMLIYMALVDLLATEFMGSMLQGSIKLQIKCFTAALLGCAVMSVVAVWA</sequence>
<name>IRT2_ARATH</name>
<protein>
    <recommendedName>
        <fullName>Fe(2+) transport protein 2</fullName>
    </recommendedName>
    <alternativeName>
        <fullName>Fe(II) transport protein 2</fullName>
    </alternativeName>
    <alternativeName>
        <fullName>Iron-regulated transporter 2</fullName>
    </alternativeName>
</protein>
<gene>
    <name type="primary">IRT2</name>
    <name type="ordered locus">At4g19680</name>
    <name type="ORF">T16H5.40</name>
</gene>
<comment type="function">
    <text evidence="2">High-affinity iron transporter that mediates under iron-deficiency the iron uptake from the rhizosphere across the plasma membrane in the root epidermal layer. Could also be capable of transporting zinc ions.</text>
</comment>
<comment type="subcellular location">
    <subcellularLocation>
        <location evidence="5">Cell membrane</location>
        <topology evidence="5">Multi-pass membrane protein</topology>
    </subcellularLocation>
</comment>
<comment type="alternative products">
    <event type="alternative splicing"/>
    <isoform>
        <id>O81850-1</id>
        <name>1</name>
        <sequence type="displayed"/>
    </isoform>
    <isoform>
        <id>O81850-2</id>
        <name>2</name>
        <sequence type="described" ref="VSP_026067 VSP_026068"/>
    </isoform>
</comment>
<comment type="tissue specificity">
    <text>Expressed in the external cell layers of the root subapical zone.</text>
</comment>
<comment type="induction">
    <text evidence="3">In roots by iron starvation.</text>
</comment>
<comment type="miscellaneous">
    <molecule>Isoform 2</molecule>
    <text evidence="5">May be due to intron retention.</text>
</comment>
<comment type="similarity">
    <text evidence="5">Belongs to the ZIP transporter (TC 2.A.5) family.</text>
</comment>
<proteinExistence type="evidence at protein level"/>
<keyword id="KW-0025">Alternative splicing</keyword>
<keyword id="KW-1003">Cell membrane</keyword>
<keyword id="KW-0406">Ion transport</keyword>
<keyword id="KW-0408">Iron</keyword>
<keyword id="KW-0410">Iron transport</keyword>
<keyword id="KW-0472">Membrane</keyword>
<keyword id="KW-1185">Reference proteome</keyword>
<keyword id="KW-0732">Signal</keyword>
<keyword id="KW-0812">Transmembrane</keyword>
<keyword id="KW-1133">Transmembrane helix</keyword>
<keyword id="KW-0813">Transport</keyword>